<evidence type="ECO:0000255" key="1">
    <source>
        <dbReference type="HAMAP-Rule" id="MF_01043"/>
    </source>
</evidence>
<sequence>MSQLTLTLLMIVSAYLAGSISSAVLVCRMRGLPDPRSEGSGNPGATNVLRIGGASSAAMVLFFDMLKGALPTYLAYLMGIDAISLGLIAIAACLGHIYPIFFGFKGGKGVATAFGAMAPIGDDLAICLMASWVVLLLISRYSSLAAIITALLAPLYTWWLDERFTIPVAMLSTLIIIRHKDNIQRLLKGEESKVSRKKRPKNP</sequence>
<proteinExistence type="inferred from homology"/>
<protein>
    <recommendedName>
        <fullName evidence="1">Glycerol-3-phosphate acyltransferase</fullName>
    </recommendedName>
    <alternativeName>
        <fullName evidence="1">Acyl-PO4 G3P acyltransferase</fullName>
    </alternativeName>
    <alternativeName>
        <fullName evidence="1">Acyl-phosphate--glycerol-3-phosphate acyltransferase</fullName>
    </alternativeName>
    <alternativeName>
        <fullName evidence="1">G3P acyltransferase</fullName>
        <shortName evidence="1">GPAT</shortName>
        <ecNumber evidence="1">2.3.1.275</ecNumber>
    </alternativeName>
    <alternativeName>
        <fullName evidence="1">Lysophosphatidic acid synthase</fullName>
        <shortName evidence="1">LPA synthase</shortName>
    </alternativeName>
</protein>
<organism>
    <name type="scientific">Shewanella putrefaciens (strain CN-32 / ATCC BAA-453)</name>
    <dbReference type="NCBI Taxonomy" id="319224"/>
    <lineage>
        <taxon>Bacteria</taxon>
        <taxon>Pseudomonadati</taxon>
        <taxon>Pseudomonadota</taxon>
        <taxon>Gammaproteobacteria</taxon>
        <taxon>Alteromonadales</taxon>
        <taxon>Shewanellaceae</taxon>
        <taxon>Shewanella</taxon>
    </lineage>
</organism>
<feature type="chain" id="PRO_1000064224" description="Glycerol-3-phosphate acyltransferase">
    <location>
        <begin position="1"/>
        <end position="203"/>
    </location>
</feature>
<feature type="transmembrane region" description="Helical" evidence="1">
    <location>
        <begin position="6"/>
        <end position="26"/>
    </location>
</feature>
<feature type="transmembrane region" description="Helical" evidence="1">
    <location>
        <begin position="82"/>
        <end position="102"/>
    </location>
</feature>
<feature type="transmembrane region" description="Helical" evidence="1">
    <location>
        <begin position="118"/>
        <end position="138"/>
    </location>
</feature>
<feature type="transmembrane region" description="Helical" evidence="1">
    <location>
        <begin position="141"/>
        <end position="161"/>
    </location>
</feature>
<keyword id="KW-0997">Cell inner membrane</keyword>
<keyword id="KW-1003">Cell membrane</keyword>
<keyword id="KW-0444">Lipid biosynthesis</keyword>
<keyword id="KW-0443">Lipid metabolism</keyword>
<keyword id="KW-0472">Membrane</keyword>
<keyword id="KW-0594">Phospholipid biosynthesis</keyword>
<keyword id="KW-1208">Phospholipid metabolism</keyword>
<keyword id="KW-0808">Transferase</keyword>
<keyword id="KW-0812">Transmembrane</keyword>
<keyword id="KW-1133">Transmembrane helix</keyword>
<accession>A4Y4F4</accession>
<comment type="function">
    <text evidence="1">Catalyzes the transfer of an acyl group from acyl-phosphate (acyl-PO(4)) to glycerol-3-phosphate (G3P) to form lysophosphatidic acid (LPA). This enzyme utilizes acyl-phosphate as fatty acyl donor, but not acyl-CoA or acyl-ACP.</text>
</comment>
<comment type="catalytic activity">
    <reaction evidence="1">
        <text>an acyl phosphate + sn-glycerol 3-phosphate = a 1-acyl-sn-glycero-3-phosphate + phosphate</text>
        <dbReference type="Rhea" id="RHEA:34075"/>
        <dbReference type="ChEBI" id="CHEBI:43474"/>
        <dbReference type="ChEBI" id="CHEBI:57597"/>
        <dbReference type="ChEBI" id="CHEBI:57970"/>
        <dbReference type="ChEBI" id="CHEBI:59918"/>
        <dbReference type="EC" id="2.3.1.275"/>
    </reaction>
</comment>
<comment type="pathway">
    <text evidence="1">Lipid metabolism; phospholipid metabolism.</text>
</comment>
<comment type="subunit">
    <text evidence="1">Probably interacts with PlsX.</text>
</comment>
<comment type="subcellular location">
    <subcellularLocation>
        <location evidence="1">Cell inner membrane</location>
        <topology evidence="1">Multi-pass membrane protein</topology>
    </subcellularLocation>
</comment>
<comment type="similarity">
    <text evidence="1">Belongs to the PlsY family.</text>
</comment>
<gene>
    <name evidence="1" type="primary">plsY</name>
    <name type="ordered locus">Sputcn32_1109</name>
</gene>
<dbReference type="EC" id="2.3.1.275" evidence="1"/>
<dbReference type="EMBL" id="CP000681">
    <property type="protein sequence ID" value="ABP74837.1"/>
    <property type="molecule type" value="Genomic_DNA"/>
</dbReference>
<dbReference type="SMR" id="A4Y4F4"/>
<dbReference type="STRING" id="319224.Sputcn32_1109"/>
<dbReference type="KEGG" id="spc:Sputcn32_1109"/>
<dbReference type="eggNOG" id="COG0344">
    <property type="taxonomic scope" value="Bacteria"/>
</dbReference>
<dbReference type="HOGENOM" id="CLU_081254_0_2_6"/>
<dbReference type="UniPathway" id="UPA00085"/>
<dbReference type="GO" id="GO:0005886">
    <property type="term" value="C:plasma membrane"/>
    <property type="evidence" value="ECO:0007669"/>
    <property type="project" value="UniProtKB-SubCell"/>
</dbReference>
<dbReference type="GO" id="GO:0043772">
    <property type="term" value="F:acyl-phosphate glycerol-3-phosphate acyltransferase activity"/>
    <property type="evidence" value="ECO:0007669"/>
    <property type="project" value="UniProtKB-UniRule"/>
</dbReference>
<dbReference type="GO" id="GO:0008654">
    <property type="term" value="P:phospholipid biosynthetic process"/>
    <property type="evidence" value="ECO:0007669"/>
    <property type="project" value="UniProtKB-UniRule"/>
</dbReference>
<dbReference type="HAMAP" id="MF_01043">
    <property type="entry name" value="PlsY"/>
    <property type="match status" value="1"/>
</dbReference>
<dbReference type="InterPro" id="IPR003811">
    <property type="entry name" value="G3P_acylTferase_PlsY"/>
</dbReference>
<dbReference type="NCBIfam" id="TIGR00023">
    <property type="entry name" value="glycerol-3-phosphate 1-O-acyltransferase PlsY"/>
    <property type="match status" value="1"/>
</dbReference>
<dbReference type="PANTHER" id="PTHR30309:SF0">
    <property type="entry name" value="GLYCEROL-3-PHOSPHATE ACYLTRANSFERASE-RELATED"/>
    <property type="match status" value="1"/>
</dbReference>
<dbReference type="PANTHER" id="PTHR30309">
    <property type="entry name" value="INNER MEMBRANE PROTEIN YGIH"/>
    <property type="match status" value="1"/>
</dbReference>
<dbReference type="Pfam" id="PF02660">
    <property type="entry name" value="G3P_acyltransf"/>
    <property type="match status" value="1"/>
</dbReference>
<dbReference type="SMART" id="SM01207">
    <property type="entry name" value="G3P_acyltransf"/>
    <property type="match status" value="1"/>
</dbReference>
<name>PLSY_SHEPC</name>
<reference key="1">
    <citation type="submission" date="2007-04" db="EMBL/GenBank/DDBJ databases">
        <title>Complete sequence of Shewanella putrefaciens CN-32.</title>
        <authorList>
            <consortium name="US DOE Joint Genome Institute"/>
            <person name="Copeland A."/>
            <person name="Lucas S."/>
            <person name="Lapidus A."/>
            <person name="Barry K."/>
            <person name="Detter J.C."/>
            <person name="Glavina del Rio T."/>
            <person name="Hammon N."/>
            <person name="Israni S."/>
            <person name="Dalin E."/>
            <person name="Tice H."/>
            <person name="Pitluck S."/>
            <person name="Chain P."/>
            <person name="Malfatti S."/>
            <person name="Shin M."/>
            <person name="Vergez L."/>
            <person name="Schmutz J."/>
            <person name="Larimer F."/>
            <person name="Land M."/>
            <person name="Hauser L."/>
            <person name="Kyrpides N."/>
            <person name="Mikhailova N."/>
            <person name="Romine M.F."/>
            <person name="Fredrickson J."/>
            <person name="Tiedje J."/>
            <person name="Richardson P."/>
        </authorList>
    </citation>
    <scope>NUCLEOTIDE SEQUENCE [LARGE SCALE GENOMIC DNA]</scope>
    <source>
        <strain>CN-32 / ATCC BAA-453</strain>
    </source>
</reference>